<proteinExistence type="inferred from homology"/>
<sequence>MEQAPEDQGPQREPYNEWTLELLEELKREAVRHFPRPWLHSLGQYIYETYGDTWAGVEAIIRILQQLLFIHFRIGCQHSRIGIIQQRRARRNGASRS</sequence>
<dbReference type="EMBL" id="K02007">
    <property type="protein sequence ID" value="AAB59878.1"/>
    <property type="molecule type" value="Genomic_RNA"/>
</dbReference>
<dbReference type="SMR" id="P05952"/>
<dbReference type="MINT" id="P05952"/>
<dbReference type="Proteomes" id="UP000007688">
    <property type="component" value="Genome"/>
</dbReference>
<dbReference type="GO" id="GO:0043657">
    <property type="term" value="C:host cell"/>
    <property type="evidence" value="ECO:0007669"/>
    <property type="project" value="GOC"/>
</dbReference>
<dbReference type="GO" id="GO:0042025">
    <property type="term" value="C:host cell nucleus"/>
    <property type="evidence" value="ECO:0007669"/>
    <property type="project" value="UniProtKB-SubCell"/>
</dbReference>
<dbReference type="GO" id="GO:0043655">
    <property type="term" value="C:host extracellular space"/>
    <property type="evidence" value="ECO:0007669"/>
    <property type="project" value="UniProtKB-SubCell"/>
</dbReference>
<dbReference type="GO" id="GO:0044423">
    <property type="term" value="C:virion component"/>
    <property type="evidence" value="ECO:0007669"/>
    <property type="project" value="UniProtKB-UniRule"/>
</dbReference>
<dbReference type="GO" id="GO:0006351">
    <property type="term" value="P:DNA-templated transcription"/>
    <property type="evidence" value="ECO:0007669"/>
    <property type="project" value="UniProtKB-UniRule"/>
</dbReference>
<dbReference type="GO" id="GO:0034220">
    <property type="term" value="P:monoatomic ion transmembrane transport"/>
    <property type="evidence" value="ECO:0007669"/>
    <property type="project" value="UniProtKB-KW"/>
</dbReference>
<dbReference type="GO" id="GO:0051260">
    <property type="term" value="P:protein homooligomerization"/>
    <property type="evidence" value="ECO:0007669"/>
    <property type="project" value="UniProtKB-UniRule"/>
</dbReference>
<dbReference type="GO" id="GO:0006355">
    <property type="term" value="P:regulation of DNA-templated transcription"/>
    <property type="evidence" value="ECO:0007669"/>
    <property type="project" value="UniProtKB-UniRule"/>
</dbReference>
<dbReference type="GO" id="GO:0046718">
    <property type="term" value="P:symbiont entry into host cell"/>
    <property type="evidence" value="ECO:0007669"/>
    <property type="project" value="UniProtKB-KW"/>
</dbReference>
<dbReference type="GO" id="GO:0052151">
    <property type="term" value="P:symbiont-mediated activation of host apoptosis"/>
    <property type="evidence" value="ECO:0007669"/>
    <property type="project" value="UniProtKB-UniRule"/>
</dbReference>
<dbReference type="GO" id="GO:0039592">
    <property type="term" value="P:symbiont-mediated arrest of host cell cycle during G2/M transition"/>
    <property type="evidence" value="ECO:0007669"/>
    <property type="project" value="UniProtKB-UniRule"/>
</dbReference>
<dbReference type="GO" id="GO:0075732">
    <property type="term" value="P:viral penetration into host nucleus"/>
    <property type="evidence" value="ECO:0007669"/>
    <property type="project" value="UniProtKB-UniRule"/>
</dbReference>
<dbReference type="Gene3D" id="6.10.210.10">
    <property type="match status" value="1"/>
</dbReference>
<dbReference type="Gene3D" id="1.20.5.90">
    <property type="entry name" value="VpR/VpX protein, C-terminal domain"/>
    <property type="match status" value="1"/>
</dbReference>
<dbReference type="HAMAP" id="MF_04080">
    <property type="entry name" value="HIV_VPR"/>
    <property type="match status" value="1"/>
</dbReference>
<dbReference type="InterPro" id="IPR000012">
    <property type="entry name" value="RetroV_VpR/X"/>
</dbReference>
<dbReference type="Pfam" id="PF00522">
    <property type="entry name" value="VPR"/>
    <property type="match status" value="1"/>
</dbReference>
<dbReference type="PRINTS" id="PR00444">
    <property type="entry name" value="HIVVPRVPX"/>
</dbReference>
<name>VPR_HV1A2</name>
<evidence type="ECO:0000255" key="1">
    <source>
        <dbReference type="HAMAP-Rule" id="MF_04080"/>
    </source>
</evidence>
<comment type="function">
    <text evidence="1">During virus replication, may deplete host UNG protein, and incude G2-M cell cycle arrest. Acts by targeting specific host proteins for degradation by the 26S proteasome, through association with the cellular CUL4A-DDB1 E3 ligase complex by direct interaction with host VPRPB/DCAF-1. Cell cycle arrest reportedly occurs within hours of infection and is not blocked by antiviral agents, suggesting that it is initiated by the VPR carried into the virion. Additionally, VPR induces apoptosis in a cell cycle dependent manner suggesting that these two effects are mechanistically linked. Detected in the serum and cerebrospinal fluid of AIDS patient, VPR may also induce cell death to bystander cells.</text>
</comment>
<comment type="function">
    <text evidence="1">During virus entry, plays a role in the transport of the viral pre-integration (PIC) complex to the host nucleus. This function is crucial for viral infection of non-dividing macrophages. May act directly at the nuclear pore complex, by binding nucleoporins phenylalanine-glycine (FG)-repeat regions.</text>
</comment>
<comment type="subunit">
    <text evidence="1">Homooligomer, may form homodimer. Interacts with p6-gag region of the Pr55 Gag precursor protein through a (Leu-X-X)4 motif near the C-terminus of the P6gag protein. Interacts with host UNG. May interact with host RAD23A/HHR23A. Interacts with host VPRBP/DCAF1, leading to hijack the CUL4A-RBX1-DDB1-DCAF1/VPRBP complex, mediating ubiquitination of host proteins such as TERT and ZGPAT and arrest of the cell cycle in G2 phase.</text>
</comment>
<comment type="subcellular location">
    <subcellularLocation>
        <location evidence="1">Virion</location>
    </subcellularLocation>
    <subcellularLocation>
        <location evidence="1">Host nucleus</location>
    </subcellularLocation>
    <subcellularLocation>
        <location evidence="1">Host extracellular space</location>
    </subcellularLocation>
    <text evidence="1">Incorporation into virion is dependent on p6 GAG sequences. Lacks a canonical nuclear localization signal, thus import into nucleus may function independently of the human importin pathway. Detected in high quantity in the serum and cerebrospinal fluid of AIDS patient.</text>
</comment>
<comment type="PTM">
    <text evidence="1">Phosphorylated on several residues by host. These phosphorylations regulate VPR activity for the nuclear import of the HIV-1 pre-integration complex.</text>
</comment>
<comment type="miscellaneous">
    <text evidence="1">HIV-1 lineages are divided in three main groups, M (for Major), O (for Outlier), and N (for New, or Non-M, Non-O). The vast majority of strains found worldwide belong to the group M. Group O seems to be endemic to and largely confined to Cameroon and neighboring countries in West Central Africa, where these viruses represent a small minority of HIV-1 strains. The group N is represented by a limited number of isolates from Cameroonian persons. The group M is further subdivided in 9 clades or subtypes (A to D, F to H, J and K).</text>
</comment>
<comment type="similarity">
    <text evidence="1">Belongs to the HIV-1 VPR protein family.</text>
</comment>
<organism>
    <name type="scientific">Human immunodeficiency virus type 1 group M subtype B (isolate ARV2/SF2)</name>
    <name type="common">HIV-1</name>
    <dbReference type="NCBI Taxonomy" id="11685"/>
    <lineage>
        <taxon>Viruses</taxon>
        <taxon>Riboviria</taxon>
        <taxon>Pararnavirae</taxon>
        <taxon>Artverviricota</taxon>
        <taxon>Revtraviricetes</taxon>
        <taxon>Ortervirales</taxon>
        <taxon>Retroviridae</taxon>
        <taxon>Orthoretrovirinae</taxon>
        <taxon>Lentivirus</taxon>
        <taxon>Human immunodeficiency virus type 1</taxon>
    </lineage>
</organism>
<feature type="chain" id="PRO_0000085438" description="Protein Vpr">
    <location>
        <begin position="1"/>
        <end position="97"/>
    </location>
</feature>
<feature type="region of interest" description="Homooligomerization" evidence="1">
    <location>
        <begin position="1"/>
        <end position="42"/>
    </location>
</feature>
<feature type="modified residue" description="Phosphoserine; by host" evidence="1">
    <location>
        <position position="79"/>
    </location>
</feature>
<feature type="modified residue" description="Phosphoserine; by host" evidence="1">
    <location>
        <position position="95"/>
    </location>
</feature>
<feature type="modified residue" description="Phosphoserine; by host" evidence="1">
    <location>
        <position position="97"/>
    </location>
</feature>
<protein>
    <recommendedName>
        <fullName evidence="1">Protein Vpr</fullName>
    </recommendedName>
    <alternativeName>
        <fullName evidence="1">R ORF protein</fullName>
    </alternativeName>
    <alternativeName>
        <fullName evidence="1">Viral protein R</fullName>
    </alternativeName>
</protein>
<keyword id="KW-0010">Activator</keyword>
<keyword id="KW-0014">AIDS</keyword>
<keyword id="KW-0053">Apoptosis</keyword>
<keyword id="KW-0131">Cell cycle</keyword>
<keyword id="KW-1079">Host G2/M cell cycle arrest by virus</keyword>
<keyword id="KW-1048">Host nucleus</keyword>
<keyword id="KW-0945">Host-virus interaction</keyword>
<keyword id="KW-0407">Ion channel</keyword>
<keyword id="KW-0406">Ion transport</keyword>
<keyword id="KW-1121">Modulation of host cell cycle by virus</keyword>
<keyword id="KW-0597">Phosphoprotein</keyword>
<keyword id="KW-1185">Reference proteome</keyword>
<keyword id="KW-0804">Transcription</keyword>
<keyword id="KW-0805">Transcription regulation</keyword>
<keyword id="KW-0813">Transport</keyword>
<keyword id="KW-1163">Viral penetration into host nucleus</keyword>
<keyword id="KW-0946">Virion</keyword>
<keyword id="KW-1160">Virus entry into host cell</keyword>
<reference key="1">
    <citation type="journal article" date="1985" name="Science">
        <title>Nucleotide sequence and expression of an AIDS-associated retrovirus (ARV-2).</title>
        <authorList>
            <person name="Sanchez-Pescador R."/>
            <person name="Power M.D."/>
            <person name="Barr P.J."/>
            <person name="Steimer K.S."/>
            <person name="Stempien M.M."/>
            <person name="Brown-Shimer S.L."/>
            <person name="Gee W.W."/>
            <person name="Renard A."/>
            <person name="Randolph A."/>
            <person name="Levy J.A."/>
            <person name="Dina D."/>
            <person name="Luciw P.A."/>
        </authorList>
    </citation>
    <scope>NUCLEOTIDE SEQUENCE [GENOMIC RNA]</scope>
</reference>
<accession>P05952</accession>
<organismHost>
    <name type="scientific">Homo sapiens</name>
    <name type="common">Human</name>
    <dbReference type="NCBI Taxonomy" id="9606"/>
</organismHost>
<gene>
    <name evidence="1" type="primary">vpr</name>
</gene>